<protein>
    <recommendedName>
        <fullName>Myosin light polypeptide 6</fullName>
    </recommendedName>
</protein>
<comment type="function">
    <text evidence="1">Regulatory light chain of myosin. Does not bind calcium (By similarity).</text>
</comment>
<comment type="subunit">
    <text evidence="3">Myosin is a hexamer of 2 heavy chains and 4 light chains. Interacts with SPATA6.</text>
</comment>
<gene>
    <name type="primary">MYL6</name>
</gene>
<accession>Q5R844</accession>
<sequence length="151" mass="16930">MCDFTEDQTAEFKEAFQLFDRTGDGKILYSQCGDVMRALGQNPTNAEVLKVLGNPKSDEMNVKVLDFEHFLPMLQTVAKNKDQGTYEDYVEGLRVFDKEGNGTVMGAEIRHVLVTLGEKMTEEEVEMLVAGHEDSNGCINYEAFVRHILSG</sequence>
<feature type="initiator methionine" description="Removed" evidence="2">
    <location>
        <position position="1"/>
    </location>
</feature>
<feature type="chain" id="PRO_0000240321" description="Myosin light polypeptide 6">
    <location>
        <begin position="2"/>
        <end position="151"/>
    </location>
</feature>
<feature type="domain" description="EF-hand 1" evidence="4">
    <location>
        <begin position="7"/>
        <end position="42"/>
    </location>
</feature>
<feature type="domain" description="EF-hand 2" evidence="4">
    <location>
        <begin position="84"/>
        <end position="119"/>
    </location>
</feature>
<feature type="domain" description="EF-hand 3" evidence="5">
    <location>
        <begin position="119"/>
        <end position="151"/>
    </location>
</feature>
<feature type="modified residue" description="N-acetylcysteine" evidence="2">
    <location>
        <position position="2"/>
    </location>
</feature>
<feature type="modified residue" description="Phosphoserine" evidence="2">
    <location>
        <position position="57"/>
    </location>
</feature>
<feature type="modified residue" description="N6-acetyllysine" evidence="2">
    <location>
        <position position="81"/>
    </location>
</feature>
<reference key="1">
    <citation type="submission" date="2004-11" db="EMBL/GenBank/DDBJ databases">
        <authorList>
            <consortium name="The German cDNA consortium"/>
        </authorList>
    </citation>
    <scope>NUCLEOTIDE SEQUENCE [LARGE SCALE MRNA]</scope>
    <source>
        <tissue>Heart</tissue>
    </source>
</reference>
<proteinExistence type="evidence at transcript level"/>
<keyword id="KW-0007">Acetylation</keyword>
<keyword id="KW-0505">Motor protein</keyword>
<keyword id="KW-0514">Muscle protein</keyword>
<keyword id="KW-0518">Myosin</keyword>
<keyword id="KW-0597">Phosphoprotein</keyword>
<keyword id="KW-1185">Reference proteome</keyword>
<keyword id="KW-0677">Repeat</keyword>
<organism>
    <name type="scientific">Pongo abelii</name>
    <name type="common">Sumatran orangutan</name>
    <name type="synonym">Pongo pygmaeus abelii</name>
    <dbReference type="NCBI Taxonomy" id="9601"/>
    <lineage>
        <taxon>Eukaryota</taxon>
        <taxon>Metazoa</taxon>
        <taxon>Chordata</taxon>
        <taxon>Craniata</taxon>
        <taxon>Vertebrata</taxon>
        <taxon>Euteleostomi</taxon>
        <taxon>Mammalia</taxon>
        <taxon>Eutheria</taxon>
        <taxon>Euarchontoglires</taxon>
        <taxon>Primates</taxon>
        <taxon>Haplorrhini</taxon>
        <taxon>Catarrhini</taxon>
        <taxon>Hominidae</taxon>
        <taxon>Pongo</taxon>
    </lineage>
</organism>
<evidence type="ECO:0000250" key="1"/>
<evidence type="ECO:0000250" key="2">
    <source>
        <dbReference type="UniProtKB" id="P60660"/>
    </source>
</evidence>
<evidence type="ECO:0000250" key="3">
    <source>
        <dbReference type="UniProtKB" id="Q60605"/>
    </source>
</evidence>
<evidence type="ECO:0000255" key="4">
    <source>
        <dbReference type="PROSITE-ProRule" id="PRU00448"/>
    </source>
</evidence>
<evidence type="ECO:0000305" key="5"/>
<name>MYL6_PONAB</name>
<dbReference type="EMBL" id="CR859910">
    <property type="protein sequence ID" value="CAH92066.1"/>
    <property type="molecule type" value="mRNA"/>
</dbReference>
<dbReference type="RefSeq" id="NP_001126203.1">
    <property type="nucleotide sequence ID" value="NM_001132731.2"/>
</dbReference>
<dbReference type="SMR" id="Q5R844"/>
<dbReference type="FunCoup" id="Q5R844">
    <property type="interactions" value="1487"/>
</dbReference>
<dbReference type="STRING" id="9601.ENSPPYP00000005293"/>
<dbReference type="Ensembl" id="ENSPPYT00000034738.1">
    <property type="protein sequence ID" value="ENSPPYP00000038293.1"/>
    <property type="gene ID" value="ENSPPYG00000004647.3"/>
</dbReference>
<dbReference type="GeneID" id="100173171"/>
<dbReference type="KEGG" id="pon:100173171"/>
<dbReference type="CTD" id="4637"/>
<dbReference type="eggNOG" id="KOG0030">
    <property type="taxonomic scope" value="Eukaryota"/>
</dbReference>
<dbReference type="GeneTree" id="ENSGT01030000234570"/>
<dbReference type="InParanoid" id="Q5R844"/>
<dbReference type="OrthoDB" id="5959761at2759"/>
<dbReference type="Proteomes" id="UP000001595">
    <property type="component" value="Chromosome 12"/>
</dbReference>
<dbReference type="GO" id="GO:0016460">
    <property type="term" value="C:myosin II complex"/>
    <property type="evidence" value="ECO:0007669"/>
    <property type="project" value="TreeGrafter"/>
</dbReference>
<dbReference type="GO" id="GO:0005509">
    <property type="term" value="F:calcium ion binding"/>
    <property type="evidence" value="ECO:0007669"/>
    <property type="project" value="InterPro"/>
</dbReference>
<dbReference type="GO" id="GO:0008307">
    <property type="term" value="F:structural constituent of muscle"/>
    <property type="evidence" value="ECO:0007669"/>
    <property type="project" value="TreeGrafter"/>
</dbReference>
<dbReference type="CDD" id="cd00051">
    <property type="entry name" value="EFh"/>
    <property type="match status" value="1"/>
</dbReference>
<dbReference type="FunFam" id="1.10.238.10:FF:000019">
    <property type="entry name" value="Myosin light chain 1 skeletal"/>
    <property type="match status" value="1"/>
</dbReference>
<dbReference type="FunFam" id="1.10.238.10:FF:000056">
    <property type="entry name" value="Myosin light chain 1 skeletal"/>
    <property type="match status" value="1"/>
</dbReference>
<dbReference type="Gene3D" id="1.10.238.10">
    <property type="entry name" value="EF-hand"/>
    <property type="match status" value="2"/>
</dbReference>
<dbReference type="InterPro" id="IPR050230">
    <property type="entry name" value="CALM/Myosin/TropC-like"/>
</dbReference>
<dbReference type="InterPro" id="IPR011992">
    <property type="entry name" value="EF-hand-dom_pair"/>
</dbReference>
<dbReference type="InterPro" id="IPR002048">
    <property type="entry name" value="EF_hand_dom"/>
</dbReference>
<dbReference type="PANTHER" id="PTHR23048">
    <property type="entry name" value="MYOSIN LIGHT CHAIN 1, 3"/>
    <property type="match status" value="1"/>
</dbReference>
<dbReference type="PANTHER" id="PTHR23048:SF43">
    <property type="entry name" value="MYOSIN LIGHT POLYPEPTIDE 6"/>
    <property type="match status" value="1"/>
</dbReference>
<dbReference type="SMART" id="SM00054">
    <property type="entry name" value="EFh"/>
    <property type="match status" value="2"/>
</dbReference>
<dbReference type="SUPFAM" id="SSF47473">
    <property type="entry name" value="EF-hand"/>
    <property type="match status" value="1"/>
</dbReference>
<dbReference type="PROSITE" id="PS50222">
    <property type="entry name" value="EF_HAND_2"/>
    <property type="match status" value="2"/>
</dbReference>